<accession>A5WE06</accession>
<feature type="chain" id="PRO_1000072439" description="Small ribosomal subunit protein bS20">
    <location>
        <begin position="1"/>
        <end position="88"/>
    </location>
</feature>
<feature type="region of interest" description="Disordered" evidence="2">
    <location>
        <begin position="1"/>
        <end position="25"/>
    </location>
</feature>
<feature type="compositionally biased region" description="Basic residues" evidence="2">
    <location>
        <begin position="7"/>
        <end position="20"/>
    </location>
</feature>
<organism>
    <name type="scientific">Psychrobacter sp. (strain PRwf-1)</name>
    <dbReference type="NCBI Taxonomy" id="349106"/>
    <lineage>
        <taxon>Bacteria</taxon>
        <taxon>Pseudomonadati</taxon>
        <taxon>Pseudomonadota</taxon>
        <taxon>Gammaproteobacteria</taxon>
        <taxon>Moraxellales</taxon>
        <taxon>Moraxellaceae</taxon>
        <taxon>Psychrobacter</taxon>
    </lineage>
</organism>
<reference key="1">
    <citation type="submission" date="2007-05" db="EMBL/GenBank/DDBJ databases">
        <title>Complete sequence of chromosome of Psychrobacter sp. PRwf-1.</title>
        <authorList>
            <consortium name="US DOE Joint Genome Institute"/>
            <person name="Copeland A."/>
            <person name="Lucas S."/>
            <person name="Lapidus A."/>
            <person name="Barry K."/>
            <person name="Detter J.C."/>
            <person name="Glavina del Rio T."/>
            <person name="Hammon N."/>
            <person name="Israni S."/>
            <person name="Dalin E."/>
            <person name="Tice H."/>
            <person name="Pitluck S."/>
            <person name="Chain P."/>
            <person name="Malfatti S."/>
            <person name="Shin M."/>
            <person name="Vergez L."/>
            <person name="Schmutz J."/>
            <person name="Larimer F."/>
            <person name="Land M."/>
            <person name="Hauser L."/>
            <person name="Kyrpides N."/>
            <person name="Kim E."/>
            <person name="Tiedje J."/>
            <person name="Richardson P."/>
        </authorList>
    </citation>
    <scope>NUCLEOTIDE SEQUENCE [LARGE SCALE GENOMIC DNA]</scope>
    <source>
        <strain>PRwf-1</strain>
    </source>
</reference>
<sequence length="88" mass="9834">MANSAQARKRVRQNNTRRQHAASQRSMIRTYIKKVDAAILAGDYDAATAAYNKAVPVIDRMADKGVIHKNKAARHKSRYNKAIKALKA</sequence>
<keyword id="KW-0687">Ribonucleoprotein</keyword>
<keyword id="KW-0689">Ribosomal protein</keyword>
<keyword id="KW-0694">RNA-binding</keyword>
<keyword id="KW-0699">rRNA-binding</keyword>
<gene>
    <name evidence="1" type="primary">rpsT</name>
    <name type="ordered locus">PsycPRwf_0947</name>
</gene>
<proteinExistence type="inferred from homology"/>
<comment type="function">
    <text evidence="1">Binds directly to 16S ribosomal RNA.</text>
</comment>
<comment type="similarity">
    <text evidence="1">Belongs to the bacterial ribosomal protein bS20 family.</text>
</comment>
<name>RS20_PSYWF</name>
<dbReference type="EMBL" id="CP000713">
    <property type="protein sequence ID" value="ABQ93897.1"/>
    <property type="molecule type" value="Genomic_DNA"/>
</dbReference>
<dbReference type="SMR" id="A5WE06"/>
<dbReference type="STRING" id="349106.PsycPRwf_0947"/>
<dbReference type="KEGG" id="prw:PsycPRwf_0947"/>
<dbReference type="eggNOG" id="COG0268">
    <property type="taxonomic scope" value="Bacteria"/>
</dbReference>
<dbReference type="HOGENOM" id="CLU_160655_4_0_6"/>
<dbReference type="GO" id="GO:0005829">
    <property type="term" value="C:cytosol"/>
    <property type="evidence" value="ECO:0007669"/>
    <property type="project" value="TreeGrafter"/>
</dbReference>
<dbReference type="GO" id="GO:0015935">
    <property type="term" value="C:small ribosomal subunit"/>
    <property type="evidence" value="ECO:0007669"/>
    <property type="project" value="TreeGrafter"/>
</dbReference>
<dbReference type="GO" id="GO:0070181">
    <property type="term" value="F:small ribosomal subunit rRNA binding"/>
    <property type="evidence" value="ECO:0007669"/>
    <property type="project" value="TreeGrafter"/>
</dbReference>
<dbReference type="GO" id="GO:0003735">
    <property type="term" value="F:structural constituent of ribosome"/>
    <property type="evidence" value="ECO:0007669"/>
    <property type="project" value="InterPro"/>
</dbReference>
<dbReference type="GO" id="GO:0006412">
    <property type="term" value="P:translation"/>
    <property type="evidence" value="ECO:0007669"/>
    <property type="project" value="UniProtKB-UniRule"/>
</dbReference>
<dbReference type="FunFam" id="1.20.58.110:FF:000001">
    <property type="entry name" value="30S ribosomal protein S20"/>
    <property type="match status" value="1"/>
</dbReference>
<dbReference type="Gene3D" id="1.20.58.110">
    <property type="entry name" value="Ribosomal protein S20"/>
    <property type="match status" value="1"/>
</dbReference>
<dbReference type="HAMAP" id="MF_00500">
    <property type="entry name" value="Ribosomal_bS20"/>
    <property type="match status" value="1"/>
</dbReference>
<dbReference type="InterPro" id="IPR002583">
    <property type="entry name" value="Ribosomal_bS20"/>
</dbReference>
<dbReference type="InterPro" id="IPR036510">
    <property type="entry name" value="Ribosomal_bS20_sf"/>
</dbReference>
<dbReference type="NCBIfam" id="TIGR00029">
    <property type="entry name" value="S20"/>
    <property type="match status" value="1"/>
</dbReference>
<dbReference type="PANTHER" id="PTHR33398">
    <property type="entry name" value="30S RIBOSOMAL PROTEIN S20"/>
    <property type="match status" value="1"/>
</dbReference>
<dbReference type="PANTHER" id="PTHR33398:SF1">
    <property type="entry name" value="SMALL RIBOSOMAL SUBUNIT PROTEIN BS20C"/>
    <property type="match status" value="1"/>
</dbReference>
<dbReference type="Pfam" id="PF01649">
    <property type="entry name" value="Ribosomal_S20p"/>
    <property type="match status" value="1"/>
</dbReference>
<dbReference type="SUPFAM" id="SSF46992">
    <property type="entry name" value="Ribosomal protein S20"/>
    <property type="match status" value="1"/>
</dbReference>
<protein>
    <recommendedName>
        <fullName evidence="1">Small ribosomal subunit protein bS20</fullName>
    </recommendedName>
    <alternativeName>
        <fullName evidence="3">30S ribosomal protein S20</fullName>
    </alternativeName>
</protein>
<evidence type="ECO:0000255" key="1">
    <source>
        <dbReference type="HAMAP-Rule" id="MF_00500"/>
    </source>
</evidence>
<evidence type="ECO:0000256" key="2">
    <source>
        <dbReference type="SAM" id="MobiDB-lite"/>
    </source>
</evidence>
<evidence type="ECO:0000305" key="3"/>